<keyword id="KW-0053">Apoptosis</keyword>
<keyword id="KW-0378">Hydrolase</keyword>
<keyword id="KW-0645">Protease</keyword>
<keyword id="KW-1185">Reference proteome</keyword>
<keyword id="KW-0788">Thiol protease</keyword>
<keyword id="KW-0865">Zymogen</keyword>
<dbReference type="EC" id="3.4.22.-"/>
<dbReference type="EMBL" id="DQ518209">
    <property type="protein sequence ID" value="ABF71662.1"/>
    <property type="molecule type" value="Genomic_DNA"/>
</dbReference>
<dbReference type="EMBL" id="AAHF01000007">
    <property type="protein sequence ID" value="EAL88381.2"/>
    <property type="status" value="ALT_SEQ"/>
    <property type="molecule type" value="Genomic_DNA"/>
</dbReference>
<dbReference type="RefSeq" id="XP_750419.2">
    <property type="nucleotide sequence ID" value="XM_745326.2"/>
</dbReference>
<dbReference type="SMR" id="Q4WJA1"/>
<dbReference type="FunCoup" id="Q4WJA1">
    <property type="interactions" value="368"/>
</dbReference>
<dbReference type="STRING" id="330879.Q4WJA1"/>
<dbReference type="GeneID" id="3507678"/>
<dbReference type="KEGG" id="afm:AFUA_1G06700"/>
<dbReference type="InParanoid" id="Q4WJA1"/>
<dbReference type="OrthoDB" id="3223806at2759"/>
<dbReference type="Proteomes" id="UP000002530">
    <property type="component" value="Chromosome 1"/>
</dbReference>
<dbReference type="GO" id="GO:0005737">
    <property type="term" value="C:cytoplasm"/>
    <property type="evidence" value="ECO:0000318"/>
    <property type="project" value="GO_Central"/>
</dbReference>
<dbReference type="GO" id="GO:0004197">
    <property type="term" value="F:cysteine-type endopeptidase activity"/>
    <property type="evidence" value="ECO:0000318"/>
    <property type="project" value="GO_Central"/>
</dbReference>
<dbReference type="GO" id="GO:0006915">
    <property type="term" value="P:apoptotic process"/>
    <property type="evidence" value="ECO:0007669"/>
    <property type="project" value="UniProtKB-KW"/>
</dbReference>
<dbReference type="GO" id="GO:0006508">
    <property type="term" value="P:proteolysis"/>
    <property type="evidence" value="ECO:0000318"/>
    <property type="project" value="GO_Central"/>
</dbReference>
<dbReference type="Gene3D" id="3.40.50.12660">
    <property type="match status" value="1"/>
</dbReference>
<dbReference type="InterPro" id="IPR029030">
    <property type="entry name" value="Caspase-like_dom_sf"/>
</dbReference>
<dbReference type="InterPro" id="IPR050452">
    <property type="entry name" value="Metacaspase"/>
</dbReference>
<dbReference type="InterPro" id="IPR011600">
    <property type="entry name" value="Pept_C14_caspase"/>
</dbReference>
<dbReference type="PANTHER" id="PTHR48104:SF30">
    <property type="entry name" value="METACASPASE-1"/>
    <property type="match status" value="1"/>
</dbReference>
<dbReference type="PANTHER" id="PTHR48104">
    <property type="entry name" value="METACASPASE-4"/>
    <property type="match status" value="1"/>
</dbReference>
<dbReference type="Pfam" id="PF00656">
    <property type="entry name" value="Peptidase_C14"/>
    <property type="match status" value="1"/>
</dbReference>
<dbReference type="SUPFAM" id="SSF52129">
    <property type="entry name" value="Caspase-like"/>
    <property type="match status" value="1"/>
</dbReference>
<evidence type="ECO:0000250" key="1"/>
<evidence type="ECO:0000255" key="2"/>
<evidence type="ECO:0000256" key="3">
    <source>
        <dbReference type="SAM" id="MobiDB-lite"/>
    </source>
</evidence>
<evidence type="ECO:0000305" key="4"/>
<sequence>MQNHHHQQSSYGGGYPGQAYREQHPPPNPYGYGQPSPQPGYGAPPPHNGYGQPPSGYGQPPPPTGNAVYGGRQPGMNQYQNTYSHGHQGGPPPPPTDPVAFGHGAPQGYSFQYSRCTGKRKALLIGINYFGQKGQLRGCINDVKNMSTYLNQNFGYAREDMVLLTDDQQNPMSQPTKANILRAMHWLVKDAQPNDSLFFHYSGHGGQTPDLDGDEEDGYDEVIYPVDFRQAGHIVDDEMHRIMVRPLRPGVRLTAIFDSCHSGSALDLPYIYSTQGILKEPNLAKEAGQGLLGVVSAYARGDMSGMVSTAVGFLKRATKGDEAYTRSKQTKTSPADVIMWSGSKDSQTSQDAQIGGQATGAMSWAFITALRKNPQQSYVQLLNSIRDELATKYSQKPQLSCSHPLDTNLLYVM</sequence>
<proteinExistence type="inferred from homology"/>
<organism>
    <name type="scientific">Aspergillus fumigatus (strain ATCC MYA-4609 / CBS 101355 / FGSC A1100 / Af293)</name>
    <name type="common">Neosartorya fumigata</name>
    <dbReference type="NCBI Taxonomy" id="330879"/>
    <lineage>
        <taxon>Eukaryota</taxon>
        <taxon>Fungi</taxon>
        <taxon>Dikarya</taxon>
        <taxon>Ascomycota</taxon>
        <taxon>Pezizomycotina</taxon>
        <taxon>Eurotiomycetes</taxon>
        <taxon>Eurotiomycetidae</taxon>
        <taxon>Eurotiales</taxon>
        <taxon>Aspergillaceae</taxon>
        <taxon>Aspergillus</taxon>
        <taxon>Aspergillus subgen. Fumigati</taxon>
    </lineage>
</organism>
<feature type="propeptide" id="PRO_0000333620" evidence="2">
    <location>
        <begin position="1"/>
        <end status="unknown"/>
    </location>
</feature>
<feature type="chain" id="PRO_0000333621" description="Metacaspase-1A">
    <location>
        <begin status="unknown"/>
        <end position="413"/>
    </location>
</feature>
<feature type="region of interest" description="Disordered" evidence="3">
    <location>
        <begin position="1"/>
        <end position="104"/>
    </location>
</feature>
<feature type="compositionally biased region" description="Pro residues" evidence="3">
    <location>
        <begin position="36"/>
        <end position="47"/>
    </location>
</feature>
<feature type="compositionally biased region" description="Low complexity" evidence="3">
    <location>
        <begin position="49"/>
        <end position="58"/>
    </location>
</feature>
<feature type="compositionally biased region" description="Polar residues" evidence="3">
    <location>
        <begin position="75"/>
        <end position="85"/>
    </location>
</feature>
<feature type="active site" evidence="1">
    <location>
        <position position="204"/>
    </location>
</feature>
<feature type="active site" evidence="1">
    <location>
        <position position="260"/>
    </location>
</feature>
<reference key="1">
    <citation type="journal article" date="2007" name="Mol. Microbiol.">
        <title>The Aspergillus fumigatus metacaspases CasA and CasB facilitate growth under conditions of endoplasmic reticulum stress.</title>
        <authorList>
            <person name="Richie D.L."/>
            <person name="Miley M.D."/>
            <person name="Bhabhra R."/>
            <person name="Robson G.D."/>
            <person name="Rhodes J.C."/>
            <person name="Askew D.S."/>
        </authorList>
    </citation>
    <scope>NUCLEOTIDE SEQUENCE [GENOMIC DNA / MRNA]</scope>
    <source>
        <strain>H237</strain>
    </source>
</reference>
<reference key="2">
    <citation type="journal article" date="2005" name="Nature">
        <title>Genomic sequence of the pathogenic and allergenic filamentous fungus Aspergillus fumigatus.</title>
        <authorList>
            <person name="Nierman W.C."/>
            <person name="Pain A."/>
            <person name="Anderson M.J."/>
            <person name="Wortman J.R."/>
            <person name="Kim H.S."/>
            <person name="Arroyo J."/>
            <person name="Berriman M."/>
            <person name="Abe K."/>
            <person name="Archer D.B."/>
            <person name="Bermejo C."/>
            <person name="Bennett J.W."/>
            <person name="Bowyer P."/>
            <person name="Chen D."/>
            <person name="Collins M."/>
            <person name="Coulsen R."/>
            <person name="Davies R."/>
            <person name="Dyer P.S."/>
            <person name="Farman M.L."/>
            <person name="Fedorova N."/>
            <person name="Fedorova N.D."/>
            <person name="Feldblyum T.V."/>
            <person name="Fischer R."/>
            <person name="Fosker N."/>
            <person name="Fraser A."/>
            <person name="Garcia J.L."/>
            <person name="Garcia M.J."/>
            <person name="Goble A."/>
            <person name="Goldman G.H."/>
            <person name="Gomi K."/>
            <person name="Griffith-Jones S."/>
            <person name="Gwilliam R."/>
            <person name="Haas B.J."/>
            <person name="Haas H."/>
            <person name="Harris D.E."/>
            <person name="Horiuchi H."/>
            <person name="Huang J."/>
            <person name="Humphray S."/>
            <person name="Jimenez J."/>
            <person name="Keller N."/>
            <person name="Khouri H."/>
            <person name="Kitamoto K."/>
            <person name="Kobayashi T."/>
            <person name="Konzack S."/>
            <person name="Kulkarni R."/>
            <person name="Kumagai T."/>
            <person name="Lafton A."/>
            <person name="Latge J.-P."/>
            <person name="Li W."/>
            <person name="Lord A."/>
            <person name="Lu C."/>
            <person name="Majoros W.H."/>
            <person name="May G.S."/>
            <person name="Miller B.L."/>
            <person name="Mohamoud Y."/>
            <person name="Molina M."/>
            <person name="Monod M."/>
            <person name="Mouyna I."/>
            <person name="Mulligan S."/>
            <person name="Murphy L.D."/>
            <person name="O'Neil S."/>
            <person name="Paulsen I."/>
            <person name="Penalva M.A."/>
            <person name="Pertea M."/>
            <person name="Price C."/>
            <person name="Pritchard B.L."/>
            <person name="Quail M.A."/>
            <person name="Rabbinowitsch E."/>
            <person name="Rawlins N."/>
            <person name="Rajandream M.A."/>
            <person name="Reichard U."/>
            <person name="Renauld H."/>
            <person name="Robson G.D."/>
            <person name="Rodriguez de Cordoba S."/>
            <person name="Rodriguez-Pena J.M."/>
            <person name="Ronning C.M."/>
            <person name="Rutter S."/>
            <person name="Salzberg S.L."/>
            <person name="Sanchez M."/>
            <person name="Sanchez-Ferrero J.C."/>
            <person name="Saunders D."/>
            <person name="Seeger K."/>
            <person name="Squares R."/>
            <person name="Squares S."/>
            <person name="Takeuchi M."/>
            <person name="Tekaia F."/>
            <person name="Turner G."/>
            <person name="Vazquez de Aldana C.R."/>
            <person name="Weidman J."/>
            <person name="White O."/>
            <person name="Woodward J.R."/>
            <person name="Yu J.-H."/>
            <person name="Fraser C.M."/>
            <person name="Galagan J.E."/>
            <person name="Asai K."/>
            <person name="Machida M."/>
            <person name="Hall N."/>
            <person name="Barrell B.G."/>
            <person name="Denning D.W."/>
        </authorList>
    </citation>
    <scope>NUCLEOTIDE SEQUENCE [LARGE SCALE GENOMIC DNA]</scope>
    <source>
        <strain>ATCC MYA-4609 / CBS 101355 / FGSC A1100 / Af293</strain>
    </source>
</reference>
<gene>
    <name type="primary">casA</name>
    <name type="ORF">AFUA_1G06700</name>
</gene>
<name>MCA1A_ASPFU</name>
<protein>
    <recommendedName>
        <fullName>Metacaspase-1A</fullName>
        <ecNumber>3.4.22.-</ecNumber>
    </recommendedName>
</protein>
<accession>Q4WJA1</accession>
<accession>A1XPK9</accession>
<comment type="function">
    <text evidence="1">Involved in cell death (apoptosis) (By similarity). Required for the apoptotic-like loss of membrane phospholipid asymmetry at stationary phase and facilitates growth under conditions of endoplasmic reticulum stress.</text>
</comment>
<comment type="similarity">
    <text evidence="4">Belongs to the peptidase C14B family.</text>
</comment>
<comment type="sequence caution" evidence="4">
    <conflict type="erroneous gene model prediction">
        <sequence resource="EMBL-CDS" id="EAL88381"/>
    </conflict>
</comment>